<gene>
    <name type="ordered locus">MIMI_R186</name>
</gene>
<dbReference type="EMBL" id="AY653733">
    <property type="protein sequence ID" value="AAV50460.1"/>
    <property type="molecule type" value="Genomic_DNA"/>
</dbReference>
<dbReference type="SMR" id="Q5URB4"/>
<dbReference type="KEGG" id="vg:9924791"/>
<dbReference type="OrthoDB" id="3397at10239"/>
<dbReference type="Proteomes" id="UP000001134">
    <property type="component" value="Genome"/>
</dbReference>
<dbReference type="GO" id="GO:0003677">
    <property type="term" value="F:DNA binding"/>
    <property type="evidence" value="ECO:0007669"/>
    <property type="project" value="UniProtKB-KW"/>
</dbReference>
<dbReference type="GO" id="GO:0046872">
    <property type="term" value="F:metal ion binding"/>
    <property type="evidence" value="ECO:0007669"/>
    <property type="project" value="UniProtKB-KW"/>
</dbReference>
<dbReference type="GO" id="GO:0006310">
    <property type="term" value="P:DNA recombination"/>
    <property type="evidence" value="ECO:0007669"/>
    <property type="project" value="UniProtKB-KW"/>
</dbReference>
<dbReference type="GO" id="GO:0032196">
    <property type="term" value="P:transposition"/>
    <property type="evidence" value="ECO:0007669"/>
    <property type="project" value="UniProtKB-KW"/>
</dbReference>
<dbReference type="InterPro" id="IPR010095">
    <property type="entry name" value="Cas12f1-like_TNB"/>
</dbReference>
<dbReference type="InterPro" id="IPR051491">
    <property type="entry name" value="Recombinase/Transposase-rel"/>
</dbReference>
<dbReference type="InterPro" id="IPR001959">
    <property type="entry name" value="Transposase"/>
</dbReference>
<dbReference type="PANTHER" id="PTHR36172">
    <property type="match status" value="1"/>
</dbReference>
<dbReference type="PANTHER" id="PTHR36172:SF1">
    <property type="entry name" value="RESOLVASE-RELATED"/>
    <property type="match status" value="1"/>
</dbReference>
<dbReference type="Pfam" id="PF07282">
    <property type="entry name" value="Cas12f1-like_TNB"/>
    <property type="match status" value="1"/>
</dbReference>
<dbReference type="Pfam" id="PF01385">
    <property type="entry name" value="OrfB_IS605"/>
    <property type="match status" value="1"/>
</dbReference>
<organismHost>
    <name type="scientific">Acanthamoeba polyphaga</name>
    <name type="common">Amoeba</name>
    <dbReference type="NCBI Taxonomy" id="5757"/>
</organismHost>
<name>YR186_MIMIV</name>
<accession>Q5URB4</accession>
<proteinExistence type="inferred from homology"/>
<comment type="similarity">
    <text evidence="2">In the central section; belongs to the transposase 2 family.</text>
</comment>
<comment type="similarity">
    <text evidence="2">In the C-terminal section; belongs to the transposase 35 family.</text>
</comment>
<organism>
    <name type="scientific">Acanthamoeba polyphaga mimivirus</name>
    <name type="common">APMV</name>
    <dbReference type="NCBI Taxonomy" id="212035"/>
    <lineage>
        <taxon>Viruses</taxon>
        <taxon>Varidnaviria</taxon>
        <taxon>Bamfordvirae</taxon>
        <taxon>Nucleocytoviricota</taxon>
        <taxon>Megaviricetes</taxon>
        <taxon>Imitervirales</taxon>
        <taxon>Mimiviridae</taxon>
        <taxon>Megamimivirinae</taxon>
        <taxon>Mimivirus</taxon>
        <taxon>Mimivirus bradfordmassiliense</taxon>
    </lineage>
</organism>
<evidence type="ECO:0000255" key="1"/>
<evidence type="ECO:0000305" key="2"/>
<feature type="chain" id="PRO_0000075540" description="Putative transposase R186">
    <location>
        <begin position="1"/>
        <end position="482"/>
    </location>
</feature>
<feature type="binding site" evidence="1">
    <location>
        <position position="416"/>
    </location>
    <ligand>
        <name>Zn(2+)</name>
        <dbReference type="ChEBI" id="CHEBI:29105"/>
    </ligand>
</feature>
<feature type="binding site" evidence="1">
    <location>
        <position position="419"/>
    </location>
    <ligand>
        <name>Zn(2+)</name>
        <dbReference type="ChEBI" id="CHEBI:29105"/>
    </ligand>
</feature>
<feature type="binding site" evidence="1">
    <location>
        <position position="433"/>
    </location>
    <ligand>
        <name>Zn(2+)</name>
        <dbReference type="ChEBI" id="CHEBI:29105"/>
    </ligand>
</feature>
<feature type="binding site" evidence="1">
    <location>
        <position position="435"/>
    </location>
    <ligand>
        <name>Zn(2+)</name>
        <dbReference type="ChEBI" id="CHEBI:29105"/>
    </ligand>
</feature>
<reference key="1">
    <citation type="journal article" date="2004" name="Science">
        <title>The 1.2-megabase genome sequence of Mimivirus.</title>
        <authorList>
            <person name="Raoult D."/>
            <person name="Audic S."/>
            <person name="Robert C."/>
            <person name="Abergel C."/>
            <person name="Renesto P."/>
            <person name="Ogata H."/>
            <person name="La Scola B."/>
            <person name="Susan M."/>
            <person name="Claverie J.-M."/>
        </authorList>
    </citation>
    <scope>NUCLEOTIDE SEQUENCE [LARGE SCALE GENOMIC DNA]</scope>
    <source>
        <strain>Rowbotham-Bradford</strain>
    </source>
</reference>
<sequence length="482" mass="57232">MVYNQDLSISNKTCGISDWLPPVRNKKISDIKSNSWFDIRRCLNPNIKTKFVPVNNKQIVLKEPNCIYLKYDLITLNPSSDHIRILREWFSLYAKIYNYAINLIRKMFYVNNKLIKSRLQCEIYDEIIIRKLSNDKTKLIESLKLSDRPPEFLLDYAISHACTYCNSQVKKYLKDSKNPYNKKTLRFRLWSLHKSRRVMHILPPKLCDKNVCNGLFLKLNPSKNIHDIYMFCVMSWDRLTGKFFVYKPVLKRLINIPKKQFTRCGIDPGVRTFLTLYSSERTYDVCDSTFYNNKIKRMWRKIDRINFLLHNRKKRKKRKNDRRLRKSLAKYYRKIRQRIKDLHTKTAKYLVSRYKEIYIGIYDTSKNLSDPRISFYEKRRIATLNHELFLTKLQQVADRFGSSVFAINEHMTTKTCSKCGRINEIGSSKVHKCACGMYAGRDENAAKNILKKGIKEHYLSAQSDKNVTEYNNKKSNNTNKET</sequence>
<keyword id="KW-0233">DNA recombination</keyword>
<keyword id="KW-0238">DNA-binding</keyword>
<keyword id="KW-0479">Metal-binding</keyword>
<keyword id="KW-1185">Reference proteome</keyword>
<keyword id="KW-0815">Transposition</keyword>
<keyword id="KW-0862">Zinc</keyword>
<protein>
    <recommendedName>
        <fullName>Putative transposase R186</fullName>
    </recommendedName>
</protein>